<organism>
    <name type="scientific">Colletotrichum dematium</name>
    <name type="common">Anthracnose fungus</name>
    <dbReference type="NCBI Taxonomy" id="34405"/>
    <lineage>
        <taxon>Eukaryota</taxon>
        <taxon>Fungi</taxon>
        <taxon>Dikarya</taxon>
        <taxon>Ascomycota</taxon>
        <taxon>Pezizomycotina</taxon>
        <taxon>Sordariomycetes</taxon>
        <taxon>Hypocreomycetidae</taxon>
        <taxon>Glomerellales</taxon>
        <taxon>Glomerellaceae</taxon>
        <taxon>Colletotrichum</taxon>
        <taxon>Colletotrichum dematium species complex</taxon>
    </lineage>
</organism>
<name>COLUA_COLDE</name>
<accession>P86168</accession>
<protein>
    <recommendedName>
        <fullName>Colutellin-A</fullName>
    </recommendedName>
</protein>
<reference evidence="3" key="1">
    <citation type="journal article" date="2008" name="Microbiology">
        <title>Colutellin A, an immunosuppressive peptide from Colletotrichum dematium.</title>
        <authorList>
            <person name="Ren Y."/>
            <person name="Strobel G.A."/>
            <person name="Graff J.C."/>
            <person name="Jutila M."/>
            <person name="Park S.G."/>
            <person name="Gosh S."/>
            <person name="Teplow D."/>
            <person name="Condron M."/>
            <person name="Pang E."/>
            <person name="Hess W.M."/>
            <person name="Moore E."/>
        </authorList>
    </citation>
    <scope>PROTEIN SEQUENCE</scope>
    <scope>FUNCTION</scope>
    <scope>SUBCELLULAR LOCATION</scope>
    <scope>MASS SPECTROMETRY</scope>
</reference>
<comment type="function">
    <text evidence="1">Has antifungal activity against S.sclerotiorum (MIC=32.4 ug/ml after 288 hours) and B.cinerea (MIC=10.8 ug/ml after 288 hours), and weak antifungal activity against F.solani, A.fumigatus and G.candidum. Lacks antifungal activity against P.ultimum, T.viride and R.solani. Inhibits the production of interleukin-2 by activated CD4+ T-cells with an IC(50) of 167.3 nM. Lacks cytotoxic activity against human peripheral blood mononuclear cells.</text>
</comment>
<comment type="subcellular location">
    <subcellularLocation>
        <location evidence="1">Secreted</location>
    </subcellularLocation>
</comment>
<comment type="mass spectrometry" mass="1095.7" method="Electrospray" evidence="1"/>
<proteinExistence type="evidence at protein level"/>
<feature type="peptide" id="PRO_0000363941" description="Colutellin-A">
    <location>
        <begin position="1"/>
        <end position="7" status="greater than"/>
    </location>
</feature>
<feature type="non-consecutive residues" evidence="2">
    <location>
        <begin position="4"/>
        <end position="5"/>
    </location>
</feature>
<feature type="non-terminal residue" evidence="2">
    <location>
        <position position="7"/>
    </location>
</feature>
<sequence length="7" mass="740">VISIIPV</sequence>
<keyword id="KW-0929">Antimicrobial</keyword>
<keyword id="KW-0903">Direct protein sequencing</keyword>
<keyword id="KW-0295">Fungicide</keyword>
<keyword id="KW-0964">Secreted</keyword>
<evidence type="ECO:0000269" key="1">
    <source>
    </source>
</evidence>
<evidence type="ECO:0000303" key="2">
    <source>
    </source>
</evidence>
<evidence type="ECO:0000305" key="3"/>
<dbReference type="GO" id="GO:0005576">
    <property type="term" value="C:extracellular region"/>
    <property type="evidence" value="ECO:0000314"/>
    <property type="project" value="UniProtKB"/>
</dbReference>
<dbReference type="GO" id="GO:0050832">
    <property type="term" value="P:defense response to fungus"/>
    <property type="evidence" value="ECO:0000314"/>
    <property type="project" value="UniProtKB"/>
</dbReference>
<dbReference type="GO" id="GO:0031640">
    <property type="term" value="P:killing of cells of another organism"/>
    <property type="evidence" value="ECO:0007669"/>
    <property type="project" value="UniProtKB-KW"/>
</dbReference>
<dbReference type="GO" id="GO:0032703">
    <property type="term" value="P:negative regulation of interleukin-2 production"/>
    <property type="evidence" value="ECO:0000314"/>
    <property type="project" value="UniProtKB"/>
</dbReference>